<keyword id="KW-1185">Reference proteome</keyword>
<keyword id="KW-0687">Ribonucleoprotein</keyword>
<keyword id="KW-0689">Ribosomal protein</keyword>
<name>RS17E_STAMF</name>
<feature type="chain" id="PRO_1000050632" description="Small ribosomal subunit protein eS17">
    <location>
        <begin position="1"/>
        <end position="68"/>
    </location>
</feature>
<accession>A3DMZ6</accession>
<organism>
    <name type="scientific">Staphylothermus marinus (strain ATCC 43588 / DSM 3639 / JCM 9404 / F1)</name>
    <dbReference type="NCBI Taxonomy" id="399550"/>
    <lineage>
        <taxon>Archaea</taxon>
        <taxon>Thermoproteota</taxon>
        <taxon>Thermoprotei</taxon>
        <taxon>Desulfurococcales</taxon>
        <taxon>Desulfurococcaceae</taxon>
        <taxon>Staphylothermus</taxon>
    </lineage>
</organism>
<sequence length="68" mass="8006">MGKVRTKIVKRTARELLEKYPNLFTRDFEHNKKVVSKLIETKSKKLRNQIAGYITHLVGIKLKRQIQA</sequence>
<protein>
    <recommendedName>
        <fullName evidence="1">Small ribosomal subunit protein eS17</fullName>
    </recommendedName>
    <alternativeName>
        <fullName evidence="2">30S ribosomal protein S17e</fullName>
    </alternativeName>
</protein>
<dbReference type="EMBL" id="CP000575">
    <property type="protein sequence ID" value="ABN70006.1"/>
    <property type="molecule type" value="Genomic_DNA"/>
</dbReference>
<dbReference type="RefSeq" id="WP_011839197.1">
    <property type="nucleotide sequence ID" value="NC_009033.1"/>
</dbReference>
<dbReference type="SMR" id="A3DMZ6"/>
<dbReference type="STRING" id="399550.Smar_0906"/>
<dbReference type="GeneID" id="4907523"/>
<dbReference type="KEGG" id="smr:Smar_0906"/>
<dbReference type="eggNOG" id="arCOG01885">
    <property type="taxonomic scope" value="Archaea"/>
</dbReference>
<dbReference type="HOGENOM" id="CLU_176720_0_1_2"/>
<dbReference type="OrthoDB" id="52479at2157"/>
<dbReference type="Proteomes" id="UP000000254">
    <property type="component" value="Chromosome"/>
</dbReference>
<dbReference type="GO" id="GO:1990904">
    <property type="term" value="C:ribonucleoprotein complex"/>
    <property type="evidence" value="ECO:0007669"/>
    <property type="project" value="UniProtKB-KW"/>
</dbReference>
<dbReference type="GO" id="GO:0005840">
    <property type="term" value="C:ribosome"/>
    <property type="evidence" value="ECO:0007669"/>
    <property type="project" value="UniProtKB-KW"/>
</dbReference>
<dbReference type="GO" id="GO:0003735">
    <property type="term" value="F:structural constituent of ribosome"/>
    <property type="evidence" value="ECO:0007669"/>
    <property type="project" value="InterPro"/>
</dbReference>
<dbReference type="GO" id="GO:0006412">
    <property type="term" value="P:translation"/>
    <property type="evidence" value="ECO:0007669"/>
    <property type="project" value="UniProtKB-UniRule"/>
</dbReference>
<dbReference type="Gene3D" id="1.10.60.20">
    <property type="entry name" value="Ribosomal protein S17e-like"/>
    <property type="match status" value="1"/>
</dbReference>
<dbReference type="HAMAP" id="MF_00511">
    <property type="entry name" value="Ribosomal_eS17"/>
    <property type="match status" value="1"/>
</dbReference>
<dbReference type="InterPro" id="IPR001210">
    <property type="entry name" value="Ribosomal_eS17"/>
</dbReference>
<dbReference type="InterPro" id="IPR036401">
    <property type="entry name" value="Ribosomal_eS17_sf"/>
</dbReference>
<dbReference type="NCBIfam" id="NF002242">
    <property type="entry name" value="PRK01151.1"/>
    <property type="match status" value="1"/>
</dbReference>
<dbReference type="PANTHER" id="PTHR10732">
    <property type="entry name" value="40S RIBOSOMAL PROTEIN S17"/>
    <property type="match status" value="1"/>
</dbReference>
<dbReference type="PANTHER" id="PTHR10732:SF0">
    <property type="entry name" value="40S RIBOSOMAL PROTEIN S17"/>
    <property type="match status" value="1"/>
</dbReference>
<dbReference type="Pfam" id="PF00833">
    <property type="entry name" value="Ribosomal_S17e"/>
    <property type="match status" value="1"/>
</dbReference>
<dbReference type="SUPFAM" id="SSF116820">
    <property type="entry name" value="Rps17e-like"/>
    <property type="match status" value="1"/>
</dbReference>
<evidence type="ECO:0000255" key="1">
    <source>
        <dbReference type="HAMAP-Rule" id="MF_00511"/>
    </source>
</evidence>
<evidence type="ECO:0000305" key="2"/>
<gene>
    <name evidence="1" type="primary">rps17e</name>
    <name type="ordered locus">Smar_0906</name>
</gene>
<reference key="1">
    <citation type="journal article" date="2009" name="BMC Genomics">
        <title>The complete genome sequence of Staphylothermus marinus reveals differences in sulfur metabolism among heterotrophic Crenarchaeota.</title>
        <authorList>
            <person name="Anderson I.J."/>
            <person name="Dharmarajan L."/>
            <person name="Rodriguez J."/>
            <person name="Hooper S."/>
            <person name="Porat I."/>
            <person name="Ulrich L.E."/>
            <person name="Elkins J.G."/>
            <person name="Mavromatis K."/>
            <person name="Sun H."/>
            <person name="Land M."/>
            <person name="Lapidus A."/>
            <person name="Lucas S."/>
            <person name="Barry K."/>
            <person name="Huber H."/>
            <person name="Zhulin I.B."/>
            <person name="Whitman W.B."/>
            <person name="Mukhopadhyay B."/>
            <person name="Woese C."/>
            <person name="Bristow J."/>
            <person name="Kyrpides N."/>
        </authorList>
    </citation>
    <scope>NUCLEOTIDE SEQUENCE [LARGE SCALE GENOMIC DNA]</scope>
    <source>
        <strain>ATCC 43588 / DSM 3639 / JCM 9404 / F1</strain>
    </source>
</reference>
<reference key="2">
    <citation type="journal article" date="2009" name="Stand. Genomic Sci.">
        <title>Complete genome sequence of Staphylothermus marinus Stetter and Fiala 1986 type strain F1.</title>
        <authorList>
            <person name="Anderson I.J."/>
            <person name="Sun H."/>
            <person name="Lapidus A."/>
            <person name="Copeland A."/>
            <person name="Glavina Del Rio T."/>
            <person name="Tice H."/>
            <person name="Dalin E."/>
            <person name="Lucas S."/>
            <person name="Barry K."/>
            <person name="Land M."/>
            <person name="Richardson P."/>
            <person name="Huber H."/>
            <person name="Kyrpides N.C."/>
        </authorList>
    </citation>
    <scope>NUCLEOTIDE SEQUENCE [LARGE SCALE GENOMIC DNA]</scope>
    <source>
        <strain>ATCC 43588 / DSM 3639 / JCM 9404 / F1</strain>
    </source>
</reference>
<proteinExistence type="inferred from homology"/>
<comment type="similarity">
    <text evidence="1">Belongs to the eukaryotic ribosomal protein eS17 family.</text>
</comment>